<gene>
    <name evidence="1" type="primary">rplR</name>
    <name type="ordered locus">swp_2027</name>
</gene>
<dbReference type="EMBL" id="CP000472">
    <property type="protein sequence ID" value="ACJ28783.1"/>
    <property type="molecule type" value="Genomic_DNA"/>
</dbReference>
<dbReference type="RefSeq" id="WP_020912151.1">
    <property type="nucleotide sequence ID" value="NC_011566.1"/>
</dbReference>
<dbReference type="SMR" id="B8CNE9"/>
<dbReference type="STRING" id="225849.swp_2027"/>
<dbReference type="KEGG" id="swp:swp_2027"/>
<dbReference type="eggNOG" id="COG0256">
    <property type="taxonomic scope" value="Bacteria"/>
</dbReference>
<dbReference type="HOGENOM" id="CLU_098841_0_1_6"/>
<dbReference type="OrthoDB" id="9810939at2"/>
<dbReference type="Proteomes" id="UP000000753">
    <property type="component" value="Chromosome"/>
</dbReference>
<dbReference type="GO" id="GO:0022625">
    <property type="term" value="C:cytosolic large ribosomal subunit"/>
    <property type="evidence" value="ECO:0007669"/>
    <property type="project" value="TreeGrafter"/>
</dbReference>
<dbReference type="GO" id="GO:0008097">
    <property type="term" value="F:5S rRNA binding"/>
    <property type="evidence" value="ECO:0007669"/>
    <property type="project" value="TreeGrafter"/>
</dbReference>
<dbReference type="GO" id="GO:0003735">
    <property type="term" value="F:structural constituent of ribosome"/>
    <property type="evidence" value="ECO:0007669"/>
    <property type="project" value="InterPro"/>
</dbReference>
<dbReference type="GO" id="GO:0006412">
    <property type="term" value="P:translation"/>
    <property type="evidence" value="ECO:0007669"/>
    <property type="project" value="UniProtKB-UniRule"/>
</dbReference>
<dbReference type="CDD" id="cd00432">
    <property type="entry name" value="Ribosomal_L18_L5e"/>
    <property type="match status" value="1"/>
</dbReference>
<dbReference type="FunFam" id="3.30.420.100:FF:000001">
    <property type="entry name" value="50S ribosomal protein L18"/>
    <property type="match status" value="1"/>
</dbReference>
<dbReference type="Gene3D" id="3.30.420.100">
    <property type="match status" value="1"/>
</dbReference>
<dbReference type="HAMAP" id="MF_01337_B">
    <property type="entry name" value="Ribosomal_uL18_B"/>
    <property type="match status" value="1"/>
</dbReference>
<dbReference type="InterPro" id="IPR004389">
    <property type="entry name" value="Ribosomal_uL18_bac-type"/>
</dbReference>
<dbReference type="InterPro" id="IPR005484">
    <property type="entry name" value="Ribosomal_uL18_bac/euk"/>
</dbReference>
<dbReference type="NCBIfam" id="TIGR00060">
    <property type="entry name" value="L18_bact"/>
    <property type="match status" value="1"/>
</dbReference>
<dbReference type="PANTHER" id="PTHR12899">
    <property type="entry name" value="39S RIBOSOMAL PROTEIN L18, MITOCHONDRIAL"/>
    <property type="match status" value="1"/>
</dbReference>
<dbReference type="PANTHER" id="PTHR12899:SF3">
    <property type="entry name" value="LARGE RIBOSOMAL SUBUNIT PROTEIN UL18M"/>
    <property type="match status" value="1"/>
</dbReference>
<dbReference type="Pfam" id="PF00861">
    <property type="entry name" value="Ribosomal_L18p"/>
    <property type="match status" value="1"/>
</dbReference>
<dbReference type="SUPFAM" id="SSF53137">
    <property type="entry name" value="Translational machinery components"/>
    <property type="match status" value="1"/>
</dbReference>
<sequence length="116" mass="12558">MDKKTSRLRRATRARKKIQELGVNRLVVHRTPRHTYAQVISPANVVLAAASTAEKAVSEQLKYTGNVDAAKAVGKTVAERAIEKGVAVVAFDRSGFKYHGRVAALADAAREAGLKF</sequence>
<organism>
    <name type="scientific">Shewanella piezotolerans (strain WP3 / JCM 13877)</name>
    <dbReference type="NCBI Taxonomy" id="225849"/>
    <lineage>
        <taxon>Bacteria</taxon>
        <taxon>Pseudomonadati</taxon>
        <taxon>Pseudomonadota</taxon>
        <taxon>Gammaproteobacteria</taxon>
        <taxon>Alteromonadales</taxon>
        <taxon>Shewanellaceae</taxon>
        <taxon>Shewanella</taxon>
    </lineage>
</organism>
<keyword id="KW-0687">Ribonucleoprotein</keyword>
<keyword id="KW-0689">Ribosomal protein</keyword>
<keyword id="KW-0694">RNA-binding</keyword>
<keyword id="KW-0699">rRNA-binding</keyword>
<feature type="chain" id="PRO_1000142719" description="Large ribosomal subunit protein uL18">
    <location>
        <begin position="1"/>
        <end position="116"/>
    </location>
</feature>
<name>RL18_SHEPW</name>
<accession>B8CNE9</accession>
<protein>
    <recommendedName>
        <fullName evidence="1">Large ribosomal subunit protein uL18</fullName>
    </recommendedName>
    <alternativeName>
        <fullName evidence="2">50S ribosomal protein L18</fullName>
    </alternativeName>
</protein>
<proteinExistence type="inferred from homology"/>
<reference key="1">
    <citation type="journal article" date="2008" name="PLoS ONE">
        <title>Environmental adaptation: genomic analysis of the piezotolerant and psychrotolerant deep-sea iron reducing bacterium Shewanella piezotolerans WP3.</title>
        <authorList>
            <person name="Wang F."/>
            <person name="Wang J."/>
            <person name="Jian H."/>
            <person name="Zhang B."/>
            <person name="Li S."/>
            <person name="Wang F."/>
            <person name="Zeng X."/>
            <person name="Gao L."/>
            <person name="Bartlett D.H."/>
            <person name="Yu J."/>
            <person name="Hu S."/>
            <person name="Xiao X."/>
        </authorList>
    </citation>
    <scope>NUCLEOTIDE SEQUENCE [LARGE SCALE GENOMIC DNA]</scope>
    <source>
        <strain>WP3 / JCM 13877</strain>
    </source>
</reference>
<evidence type="ECO:0000255" key="1">
    <source>
        <dbReference type="HAMAP-Rule" id="MF_01337"/>
    </source>
</evidence>
<evidence type="ECO:0000305" key="2"/>
<comment type="function">
    <text evidence="1">This is one of the proteins that bind and probably mediate the attachment of the 5S RNA into the large ribosomal subunit, where it forms part of the central protuberance.</text>
</comment>
<comment type="subunit">
    <text evidence="1">Part of the 50S ribosomal subunit; part of the 5S rRNA/L5/L18/L25 subcomplex. Contacts the 5S and 23S rRNAs.</text>
</comment>
<comment type="similarity">
    <text evidence="1">Belongs to the universal ribosomal protein uL18 family.</text>
</comment>